<feature type="chain" id="PRO_0000176338" description="Elongation factor 4">
    <location>
        <begin position="1"/>
        <end position="596"/>
    </location>
</feature>
<feature type="domain" description="tr-type G">
    <location>
        <begin position="2"/>
        <end position="184"/>
    </location>
</feature>
<feature type="binding site" evidence="1">
    <location>
        <begin position="14"/>
        <end position="19"/>
    </location>
    <ligand>
        <name>GTP</name>
        <dbReference type="ChEBI" id="CHEBI:37565"/>
    </ligand>
</feature>
<feature type="binding site" evidence="1">
    <location>
        <begin position="131"/>
        <end position="134"/>
    </location>
    <ligand>
        <name>GTP</name>
        <dbReference type="ChEBI" id="CHEBI:37565"/>
    </ligand>
</feature>
<name>LEPA_SHEON</name>
<accession>Q8EH83</accession>
<gene>
    <name evidence="1" type="primary">lepA</name>
    <name type="ordered locus">SO_1346</name>
</gene>
<sequence length="596" mass="65972">MKHIRNFSIIAHIDHGKSTLSDRLIQVCGGLSDREMDAQVLDSMDLERERGITIKAQSVTLEYKAKNGEIYQLNFIDTPGHVDFSYEVSRSLAACEGALLVVDAGQGVEAQTLANCYTALDMNLDVVPILNKIDLPQADPERVAAEIEDIVGIDAMNAVRCSAKTGVGIDDVLEVIVEQIPPPEGNPDAPLQALIIDSWFDSYLGVVSLVRIKHGVLKKGDKFKVMSTGQNHTADRVGIFTPKQTDKTELKTGEVGFVIAGIKEIHGAPVGDTLTLAKNGADKPLPGFKKVKPQVYAGVFPISTDEYENFRDALNKLSLNDASLFFEPESSSALGFGFRIGYLGLLHMEIIQERLEREYDLDLITTAPTVVYEVLMTSGETIYVDNPADLPAINNIEEMREPIVEANILVPKEYLGNVITLCIEKRGTQVNMVYHGNQVAVTYHLPMAEVVMDFFDRLKSTSRGYASLEYNFIRFDPADMVRLDILINGDRVDALAMIIHRSNIRHRGLALVEKMKELIPRQMFDIAIQAAVGSQIIARSTVKALRKDVTAKCYGGDVSRKKKLLNKQKEGKKRMKQVGNVEVPQEAFLAVLKLNE</sequence>
<reference key="1">
    <citation type="journal article" date="2002" name="Nat. Biotechnol.">
        <title>Genome sequence of the dissimilatory metal ion-reducing bacterium Shewanella oneidensis.</title>
        <authorList>
            <person name="Heidelberg J.F."/>
            <person name="Paulsen I.T."/>
            <person name="Nelson K.E."/>
            <person name="Gaidos E.J."/>
            <person name="Nelson W.C."/>
            <person name="Read T.D."/>
            <person name="Eisen J.A."/>
            <person name="Seshadri R."/>
            <person name="Ward N.L."/>
            <person name="Methe B.A."/>
            <person name="Clayton R.A."/>
            <person name="Meyer T."/>
            <person name="Tsapin A."/>
            <person name="Scott J."/>
            <person name="Beanan M.J."/>
            <person name="Brinkac L.M."/>
            <person name="Daugherty S.C."/>
            <person name="DeBoy R.T."/>
            <person name="Dodson R.J."/>
            <person name="Durkin A.S."/>
            <person name="Haft D.H."/>
            <person name="Kolonay J.F."/>
            <person name="Madupu R."/>
            <person name="Peterson J.D."/>
            <person name="Umayam L.A."/>
            <person name="White O."/>
            <person name="Wolf A.M."/>
            <person name="Vamathevan J.J."/>
            <person name="Weidman J.F."/>
            <person name="Impraim M."/>
            <person name="Lee K."/>
            <person name="Berry K.J."/>
            <person name="Lee C."/>
            <person name="Mueller J."/>
            <person name="Khouri H.M."/>
            <person name="Gill J."/>
            <person name="Utterback T.R."/>
            <person name="McDonald L.A."/>
            <person name="Feldblyum T.V."/>
            <person name="Smith H.O."/>
            <person name="Venter J.C."/>
            <person name="Nealson K.H."/>
            <person name="Fraser C.M."/>
        </authorList>
    </citation>
    <scope>NUCLEOTIDE SEQUENCE [LARGE SCALE GENOMIC DNA]</scope>
    <source>
        <strain>ATCC 700550 / JCM 31522 / CIP 106686 / LMG 19005 / NCIMB 14063 / MR-1</strain>
    </source>
</reference>
<dbReference type="EC" id="3.6.5.n1" evidence="1"/>
<dbReference type="EMBL" id="AE014299">
    <property type="protein sequence ID" value="AAN54411.1"/>
    <property type="molecule type" value="Genomic_DNA"/>
</dbReference>
<dbReference type="RefSeq" id="NP_716966.1">
    <property type="nucleotide sequence ID" value="NC_004347.2"/>
</dbReference>
<dbReference type="RefSeq" id="WP_011071555.1">
    <property type="nucleotide sequence ID" value="NC_004347.2"/>
</dbReference>
<dbReference type="SMR" id="Q8EH83"/>
<dbReference type="STRING" id="211586.SO_1346"/>
<dbReference type="PaxDb" id="211586-SO_1346"/>
<dbReference type="KEGG" id="son:SO_1346"/>
<dbReference type="PATRIC" id="fig|211586.12.peg.1295"/>
<dbReference type="eggNOG" id="COG0481">
    <property type="taxonomic scope" value="Bacteria"/>
</dbReference>
<dbReference type="HOGENOM" id="CLU_009995_3_3_6"/>
<dbReference type="OrthoDB" id="9804431at2"/>
<dbReference type="PhylomeDB" id="Q8EH83"/>
<dbReference type="BioCyc" id="SONE211586:G1GMP-1244-MONOMER"/>
<dbReference type="Proteomes" id="UP000008186">
    <property type="component" value="Chromosome"/>
</dbReference>
<dbReference type="GO" id="GO:0005886">
    <property type="term" value="C:plasma membrane"/>
    <property type="evidence" value="ECO:0007669"/>
    <property type="project" value="UniProtKB-SubCell"/>
</dbReference>
<dbReference type="GO" id="GO:0005525">
    <property type="term" value="F:GTP binding"/>
    <property type="evidence" value="ECO:0007669"/>
    <property type="project" value="UniProtKB-UniRule"/>
</dbReference>
<dbReference type="GO" id="GO:0003924">
    <property type="term" value="F:GTPase activity"/>
    <property type="evidence" value="ECO:0007669"/>
    <property type="project" value="UniProtKB-UniRule"/>
</dbReference>
<dbReference type="GO" id="GO:0097216">
    <property type="term" value="F:guanosine tetraphosphate binding"/>
    <property type="evidence" value="ECO:0007669"/>
    <property type="project" value="UniProtKB-ARBA"/>
</dbReference>
<dbReference type="GO" id="GO:0043022">
    <property type="term" value="F:ribosome binding"/>
    <property type="evidence" value="ECO:0000318"/>
    <property type="project" value="GO_Central"/>
</dbReference>
<dbReference type="GO" id="GO:0003746">
    <property type="term" value="F:translation elongation factor activity"/>
    <property type="evidence" value="ECO:0007669"/>
    <property type="project" value="UniProtKB-UniRule"/>
</dbReference>
<dbReference type="GO" id="GO:0045727">
    <property type="term" value="P:positive regulation of translation"/>
    <property type="evidence" value="ECO:0000318"/>
    <property type="project" value="GO_Central"/>
</dbReference>
<dbReference type="CDD" id="cd03699">
    <property type="entry name" value="EF4_II"/>
    <property type="match status" value="1"/>
</dbReference>
<dbReference type="CDD" id="cd16260">
    <property type="entry name" value="EF4_III"/>
    <property type="match status" value="1"/>
</dbReference>
<dbReference type="CDD" id="cd01890">
    <property type="entry name" value="LepA"/>
    <property type="match status" value="1"/>
</dbReference>
<dbReference type="CDD" id="cd03709">
    <property type="entry name" value="lepA_C"/>
    <property type="match status" value="1"/>
</dbReference>
<dbReference type="FunFam" id="3.40.50.300:FF:000078">
    <property type="entry name" value="Elongation factor 4"/>
    <property type="match status" value="1"/>
</dbReference>
<dbReference type="FunFam" id="2.40.30.10:FF:000015">
    <property type="entry name" value="Translation factor GUF1, mitochondrial"/>
    <property type="match status" value="1"/>
</dbReference>
<dbReference type="FunFam" id="3.30.70.240:FF:000007">
    <property type="entry name" value="Translation factor GUF1, mitochondrial"/>
    <property type="match status" value="1"/>
</dbReference>
<dbReference type="FunFam" id="3.30.70.2570:FF:000001">
    <property type="entry name" value="Translation factor GUF1, mitochondrial"/>
    <property type="match status" value="1"/>
</dbReference>
<dbReference type="FunFam" id="3.30.70.870:FF:000004">
    <property type="entry name" value="Translation factor GUF1, mitochondrial"/>
    <property type="match status" value="1"/>
</dbReference>
<dbReference type="Gene3D" id="3.30.70.240">
    <property type="match status" value="1"/>
</dbReference>
<dbReference type="Gene3D" id="3.30.70.2570">
    <property type="entry name" value="Elongation factor 4, C-terminal domain"/>
    <property type="match status" value="1"/>
</dbReference>
<dbReference type="Gene3D" id="3.30.70.870">
    <property type="entry name" value="Elongation Factor G (Translational Gtpase), domain 3"/>
    <property type="match status" value="1"/>
</dbReference>
<dbReference type="Gene3D" id="3.40.50.300">
    <property type="entry name" value="P-loop containing nucleotide triphosphate hydrolases"/>
    <property type="match status" value="1"/>
</dbReference>
<dbReference type="Gene3D" id="2.40.30.10">
    <property type="entry name" value="Translation factors"/>
    <property type="match status" value="1"/>
</dbReference>
<dbReference type="HAMAP" id="MF_00071">
    <property type="entry name" value="LepA"/>
    <property type="match status" value="1"/>
</dbReference>
<dbReference type="InterPro" id="IPR006297">
    <property type="entry name" value="EF-4"/>
</dbReference>
<dbReference type="InterPro" id="IPR035647">
    <property type="entry name" value="EFG_III/V"/>
</dbReference>
<dbReference type="InterPro" id="IPR000640">
    <property type="entry name" value="EFG_V-like"/>
</dbReference>
<dbReference type="InterPro" id="IPR004161">
    <property type="entry name" value="EFTu-like_2"/>
</dbReference>
<dbReference type="InterPro" id="IPR031157">
    <property type="entry name" value="G_TR_CS"/>
</dbReference>
<dbReference type="InterPro" id="IPR038363">
    <property type="entry name" value="LepA_C_sf"/>
</dbReference>
<dbReference type="InterPro" id="IPR013842">
    <property type="entry name" value="LepA_CTD"/>
</dbReference>
<dbReference type="InterPro" id="IPR035654">
    <property type="entry name" value="LepA_IV"/>
</dbReference>
<dbReference type="InterPro" id="IPR027417">
    <property type="entry name" value="P-loop_NTPase"/>
</dbReference>
<dbReference type="InterPro" id="IPR005225">
    <property type="entry name" value="Small_GTP-bd"/>
</dbReference>
<dbReference type="InterPro" id="IPR000795">
    <property type="entry name" value="T_Tr_GTP-bd_dom"/>
</dbReference>
<dbReference type="NCBIfam" id="TIGR01393">
    <property type="entry name" value="lepA"/>
    <property type="match status" value="1"/>
</dbReference>
<dbReference type="NCBIfam" id="TIGR00231">
    <property type="entry name" value="small_GTP"/>
    <property type="match status" value="1"/>
</dbReference>
<dbReference type="PANTHER" id="PTHR43512:SF4">
    <property type="entry name" value="TRANSLATION FACTOR GUF1 HOMOLOG, CHLOROPLASTIC"/>
    <property type="match status" value="1"/>
</dbReference>
<dbReference type="PANTHER" id="PTHR43512">
    <property type="entry name" value="TRANSLATION FACTOR GUF1-RELATED"/>
    <property type="match status" value="1"/>
</dbReference>
<dbReference type="Pfam" id="PF00679">
    <property type="entry name" value="EFG_C"/>
    <property type="match status" value="1"/>
</dbReference>
<dbReference type="Pfam" id="PF00009">
    <property type="entry name" value="GTP_EFTU"/>
    <property type="match status" value="1"/>
</dbReference>
<dbReference type="Pfam" id="PF03144">
    <property type="entry name" value="GTP_EFTU_D2"/>
    <property type="match status" value="1"/>
</dbReference>
<dbReference type="Pfam" id="PF06421">
    <property type="entry name" value="LepA_C"/>
    <property type="match status" value="1"/>
</dbReference>
<dbReference type="PRINTS" id="PR00315">
    <property type="entry name" value="ELONGATNFCT"/>
</dbReference>
<dbReference type="SMART" id="SM00838">
    <property type="entry name" value="EFG_C"/>
    <property type="match status" value="1"/>
</dbReference>
<dbReference type="SUPFAM" id="SSF54980">
    <property type="entry name" value="EF-G C-terminal domain-like"/>
    <property type="match status" value="2"/>
</dbReference>
<dbReference type="SUPFAM" id="SSF52540">
    <property type="entry name" value="P-loop containing nucleoside triphosphate hydrolases"/>
    <property type="match status" value="1"/>
</dbReference>
<dbReference type="PROSITE" id="PS00301">
    <property type="entry name" value="G_TR_1"/>
    <property type="match status" value="1"/>
</dbReference>
<dbReference type="PROSITE" id="PS51722">
    <property type="entry name" value="G_TR_2"/>
    <property type="match status" value="1"/>
</dbReference>
<organism>
    <name type="scientific">Shewanella oneidensis (strain ATCC 700550 / JCM 31522 / CIP 106686 / LMG 19005 / NCIMB 14063 / MR-1)</name>
    <dbReference type="NCBI Taxonomy" id="211586"/>
    <lineage>
        <taxon>Bacteria</taxon>
        <taxon>Pseudomonadati</taxon>
        <taxon>Pseudomonadota</taxon>
        <taxon>Gammaproteobacteria</taxon>
        <taxon>Alteromonadales</taxon>
        <taxon>Shewanellaceae</taxon>
        <taxon>Shewanella</taxon>
    </lineage>
</organism>
<evidence type="ECO:0000255" key="1">
    <source>
        <dbReference type="HAMAP-Rule" id="MF_00071"/>
    </source>
</evidence>
<proteinExistence type="inferred from homology"/>
<protein>
    <recommendedName>
        <fullName evidence="1">Elongation factor 4</fullName>
        <shortName evidence="1">EF-4</shortName>
        <ecNumber evidence="1">3.6.5.n1</ecNumber>
    </recommendedName>
    <alternativeName>
        <fullName evidence="1">Ribosomal back-translocase LepA</fullName>
    </alternativeName>
</protein>
<keyword id="KW-0997">Cell inner membrane</keyword>
<keyword id="KW-1003">Cell membrane</keyword>
<keyword id="KW-0342">GTP-binding</keyword>
<keyword id="KW-0378">Hydrolase</keyword>
<keyword id="KW-0472">Membrane</keyword>
<keyword id="KW-0547">Nucleotide-binding</keyword>
<keyword id="KW-0648">Protein biosynthesis</keyword>
<keyword id="KW-1185">Reference proteome</keyword>
<comment type="function">
    <text evidence="1">Required for accurate and efficient protein synthesis under certain stress conditions. May act as a fidelity factor of the translation reaction, by catalyzing a one-codon backward translocation of tRNAs on improperly translocated ribosomes. Back-translocation proceeds from a post-translocation (POST) complex to a pre-translocation (PRE) complex, thus giving elongation factor G a second chance to translocate the tRNAs correctly. Binds to ribosomes in a GTP-dependent manner.</text>
</comment>
<comment type="catalytic activity">
    <reaction evidence="1">
        <text>GTP + H2O = GDP + phosphate + H(+)</text>
        <dbReference type="Rhea" id="RHEA:19669"/>
        <dbReference type="ChEBI" id="CHEBI:15377"/>
        <dbReference type="ChEBI" id="CHEBI:15378"/>
        <dbReference type="ChEBI" id="CHEBI:37565"/>
        <dbReference type="ChEBI" id="CHEBI:43474"/>
        <dbReference type="ChEBI" id="CHEBI:58189"/>
        <dbReference type="EC" id="3.6.5.n1"/>
    </reaction>
</comment>
<comment type="subcellular location">
    <subcellularLocation>
        <location evidence="1">Cell inner membrane</location>
        <topology evidence="1">Peripheral membrane protein</topology>
        <orientation evidence="1">Cytoplasmic side</orientation>
    </subcellularLocation>
</comment>
<comment type="similarity">
    <text evidence="1">Belongs to the TRAFAC class translation factor GTPase superfamily. Classic translation factor GTPase family. LepA subfamily.</text>
</comment>